<dbReference type="EC" id="1.1.1.267" evidence="1"/>
<dbReference type="EMBL" id="CP000438">
    <property type="protein sequence ID" value="ABJ12883.1"/>
    <property type="molecule type" value="Genomic_DNA"/>
</dbReference>
<dbReference type="SMR" id="Q02RC2"/>
<dbReference type="KEGG" id="pau:PA14_17130"/>
<dbReference type="PseudoCAP" id="PA14_17130"/>
<dbReference type="HOGENOM" id="CLU_035714_4_0_6"/>
<dbReference type="BioCyc" id="PAER208963:G1G74-1411-MONOMER"/>
<dbReference type="UniPathway" id="UPA00056">
    <property type="reaction ID" value="UER00092"/>
</dbReference>
<dbReference type="Proteomes" id="UP000000653">
    <property type="component" value="Chromosome"/>
</dbReference>
<dbReference type="GO" id="GO:0030604">
    <property type="term" value="F:1-deoxy-D-xylulose-5-phosphate reductoisomerase activity"/>
    <property type="evidence" value="ECO:0007669"/>
    <property type="project" value="UniProtKB-UniRule"/>
</dbReference>
<dbReference type="GO" id="GO:0030145">
    <property type="term" value="F:manganese ion binding"/>
    <property type="evidence" value="ECO:0007669"/>
    <property type="project" value="TreeGrafter"/>
</dbReference>
<dbReference type="GO" id="GO:0070402">
    <property type="term" value="F:NADPH binding"/>
    <property type="evidence" value="ECO:0007669"/>
    <property type="project" value="InterPro"/>
</dbReference>
<dbReference type="GO" id="GO:0051484">
    <property type="term" value="P:isopentenyl diphosphate biosynthetic process, methylerythritol 4-phosphate pathway involved in terpenoid biosynthetic process"/>
    <property type="evidence" value="ECO:0007669"/>
    <property type="project" value="TreeGrafter"/>
</dbReference>
<dbReference type="FunFam" id="1.10.1740.10:FF:000004">
    <property type="entry name" value="1-deoxy-D-xylulose 5-phosphate reductoisomerase"/>
    <property type="match status" value="1"/>
</dbReference>
<dbReference type="FunFam" id="3.40.50.720:FF:000045">
    <property type="entry name" value="1-deoxy-D-xylulose 5-phosphate reductoisomerase"/>
    <property type="match status" value="1"/>
</dbReference>
<dbReference type="Gene3D" id="1.10.1740.10">
    <property type="match status" value="1"/>
</dbReference>
<dbReference type="Gene3D" id="3.40.50.720">
    <property type="entry name" value="NAD(P)-binding Rossmann-like Domain"/>
    <property type="match status" value="1"/>
</dbReference>
<dbReference type="HAMAP" id="MF_00183">
    <property type="entry name" value="DXP_reductoisom"/>
    <property type="match status" value="1"/>
</dbReference>
<dbReference type="InterPro" id="IPR003821">
    <property type="entry name" value="DXP_reductoisomerase"/>
</dbReference>
<dbReference type="InterPro" id="IPR013644">
    <property type="entry name" value="DXP_reductoisomerase_C"/>
</dbReference>
<dbReference type="InterPro" id="IPR013512">
    <property type="entry name" value="DXP_reductoisomerase_N"/>
</dbReference>
<dbReference type="InterPro" id="IPR026877">
    <property type="entry name" value="DXPR_C"/>
</dbReference>
<dbReference type="InterPro" id="IPR036169">
    <property type="entry name" value="DXPR_C_sf"/>
</dbReference>
<dbReference type="InterPro" id="IPR036291">
    <property type="entry name" value="NAD(P)-bd_dom_sf"/>
</dbReference>
<dbReference type="NCBIfam" id="TIGR00243">
    <property type="entry name" value="Dxr"/>
    <property type="match status" value="1"/>
</dbReference>
<dbReference type="NCBIfam" id="NF003938">
    <property type="entry name" value="PRK05447.1-1"/>
    <property type="match status" value="1"/>
</dbReference>
<dbReference type="NCBIfam" id="NF009114">
    <property type="entry name" value="PRK12464.1"/>
    <property type="match status" value="1"/>
</dbReference>
<dbReference type="PANTHER" id="PTHR30525">
    <property type="entry name" value="1-DEOXY-D-XYLULOSE 5-PHOSPHATE REDUCTOISOMERASE"/>
    <property type="match status" value="1"/>
</dbReference>
<dbReference type="PANTHER" id="PTHR30525:SF0">
    <property type="entry name" value="1-DEOXY-D-XYLULOSE 5-PHOSPHATE REDUCTOISOMERASE, CHLOROPLASTIC"/>
    <property type="match status" value="1"/>
</dbReference>
<dbReference type="Pfam" id="PF08436">
    <property type="entry name" value="DXP_redisom_C"/>
    <property type="match status" value="1"/>
</dbReference>
<dbReference type="Pfam" id="PF02670">
    <property type="entry name" value="DXP_reductoisom"/>
    <property type="match status" value="1"/>
</dbReference>
<dbReference type="Pfam" id="PF13288">
    <property type="entry name" value="DXPR_C"/>
    <property type="match status" value="1"/>
</dbReference>
<dbReference type="PIRSF" id="PIRSF006205">
    <property type="entry name" value="Dxp_reductismrs"/>
    <property type="match status" value="1"/>
</dbReference>
<dbReference type="SUPFAM" id="SSF69055">
    <property type="entry name" value="1-deoxy-D-xylulose-5-phosphate reductoisomerase, C-terminal domain"/>
    <property type="match status" value="1"/>
</dbReference>
<dbReference type="SUPFAM" id="SSF55347">
    <property type="entry name" value="Glyceraldehyde-3-phosphate dehydrogenase-like, C-terminal domain"/>
    <property type="match status" value="1"/>
</dbReference>
<dbReference type="SUPFAM" id="SSF51735">
    <property type="entry name" value="NAD(P)-binding Rossmann-fold domains"/>
    <property type="match status" value="1"/>
</dbReference>
<name>DXR_PSEAB</name>
<organism>
    <name type="scientific">Pseudomonas aeruginosa (strain UCBPP-PA14)</name>
    <dbReference type="NCBI Taxonomy" id="208963"/>
    <lineage>
        <taxon>Bacteria</taxon>
        <taxon>Pseudomonadati</taxon>
        <taxon>Pseudomonadota</taxon>
        <taxon>Gammaproteobacteria</taxon>
        <taxon>Pseudomonadales</taxon>
        <taxon>Pseudomonadaceae</taxon>
        <taxon>Pseudomonas</taxon>
    </lineage>
</organism>
<proteinExistence type="inferred from homology"/>
<comment type="function">
    <text evidence="1">Catalyzes the NADPH-dependent rearrangement and reduction of 1-deoxy-D-xylulose-5-phosphate (DXP) to 2-C-methyl-D-erythritol 4-phosphate (MEP).</text>
</comment>
<comment type="catalytic activity">
    <reaction evidence="1">
        <text>2-C-methyl-D-erythritol 4-phosphate + NADP(+) = 1-deoxy-D-xylulose 5-phosphate + NADPH + H(+)</text>
        <dbReference type="Rhea" id="RHEA:13717"/>
        <dbReference type="ChEBI" id="CHEBI:15378"/>
        <dbReference type="ChEBI" id="CHEBI:57783"/>
        <dbReference type="ChEBI" id="CHEBI:57792"/>
        <dbReference type="ChEBI" id="CHEBI:58262"/>
        <dbReference type="ChEBI" id="CHEBI:58349"/>
        <dbReference type="EC" id="1.1.1.267"/>
    </reaction>
    <physiologicalReaction direction="right-to-left" evidence="1">
        <dbReference type="Rhea" id="RHEA:13719"/>
    </physiologicalReaction>
</comment>
<comment type="cofactor">
    <cofactor evidence="1">
        <name>Mg(2+)</name>
        <dbReference type="ChEBI" id="CHEBI:18420"/>
    </cofactor>
    <cofactor evidence="1">
        <name>Mn(2+)</name>
        <dbReference type="ChEBI" id="CHEBI:29035"/>
    </cofactor>
</comment>
<comment type="pathway">
    <text evidence="1">Isoprenoid biosynthesis; isopentenyl diphosphate biosynthesis via DXP pathway; isopentenyl diphosphate from 1-deoxy-D-xylulose 5-phosphate: step 1/6.</text>
</comment>
<comment type="similarity">
    <text evidence="1">Belongs to the DXR family.</text>
</comment>
<sequence length="396" mass="42528">MSRPQRISVLGATGSIGLSTLDVVQRHPDRYEAFALTGFSRLAELEALCLRHRPVYAVVPEQAAAIALQGSLAAAGIRTRVLFGEQALCEVASAPEVDMVMAAIVGAAGLPSTLAAVEAGKRVLLANKEALVMSGALFMQAVKRSGAVLLPIDSEHNAIFQSLPRNYADGLERVGVRRILLTASGGPFRETPLEQLASVTPEQACAHPNWSMGRKISVDSASMMNKGLELIEACWLFDAQPSQVEVVIHPQSVIHSMVDYVDGSVIAQLGNPDMRTPISYAMAWPERIDSGVSPLDMFAVGRLDFQRPDEQRFPCLRLASQAAETGGSAPAMLNAANEVAVAAFLERRIRFSDIAVIIEDVLNREAVTAVESLDQVLAADRRARSVAGQWLTRHAG</sequence>
<accession>Q02RC2</accession>
<keyword id="KW-0414">Isoprene biosynthesis</keyword>
<keyword id="KW-0464">Manganese</keyword>
<keyword id="KW-0479">Metal-binding</keyword>
<keyword id="KW-0521">NADP</keyword>
<keyword id="KW-0560">Oxidoreductase</keyword>
<evidence type="ECO:0000255" key="1">
    <source>
        <dbReference type="HAMAP-Rule" id="MF_00183"/>
    </source>
</evidence>
<gene>
    <name evidence="1" type="primary">dxr</name>
    <name type="ordered locus">PA14_17130</name>
</gene>
<feature type="chain" id="PRO_1000020290" description="1-deoxy-D-xylulose 5-phosphate reductoisomerase">
    <location>
        <begin position="1"/>
        <end position="396"/>
    </location>
</feature>
<feature type="binding site" evidence="1">
    <location>
        <position position="13"/>
    </location>
    <ligand>
        <name>NADPH</name>
        <dbReference type="ChEBI" id="CHEBI:57783"/>
    </ligand>
</feature>
<feature type="binding site" evidence="1">
    <location>
        <position position="14"/>
    </location>
    <ligand>
        <name>NADPH</name>
        <dbReference type="ChEBI" id="CHEBI:57783"/>
    </ligand>
</feature>
<feature type="binding site" evidence="1">
    <location>
        <position position="15"/>
    </location>
    <ligand>
        <name>NADPH</name>
        <dbReference type="ChEBI" id="CHEBI:57783"/>
    </ligand>
</feature>
<feature type="binding site" evidence="1">
    <location>
        <position position="16"/>
    </location>
    <ligand>
        <name>NADPH</name>
        <dbReference type="ChEBI" id="CHEBI:57783"/>
    </ligand>
</feature>
<feature type="binding site" evidence="1">
    <location>
        <position position="127"/>
    </location>
    <ligand>
        <name>NADPH</name>
        <dbReference type="ChEBI" id="CHEBI:57783"/>
    </ligand>
</feature>
<feature type="binding site" evidence="1">
    <location>
        <position position="128"/>
    </location>
    <ligand>
        <name>1-deoxy-D-xylulose 5-phosphate</name>
        <dbReference type="ChEBI" id="CHEBI:57792"/>
    </ligand>
</feature>
<feature type="binding site" evidence="1">
    <location>
        <position position="129"/>
    </location>
    <ligand>
        <name>NADPH</name>
        <dbReference type="ChEBI" id="CHEBI:57783"/>
    </ligand>
</feature>
<feature type="binding site" evidence="1">
    <location>
        <position position="153"/>
    </location>
    <ligand>
        <name>Mn(2+)</name>
        <dbReference type="ChEBI" id="CHEBI:29035"/>
    </ligand>
</feature>
<feature type="binding site" evidence="1">
    <location>
        <position position="154"/>
    </location>
    <ligand>
        <name>1-deoxy-D-xylulose 5-phosphate</name>
        <dbReference type="ChEBI" id="CHEBI:57792"/>
    </ligand>
</feature>
<feature type="binding site" evidence="1">
    <location>
        <position position="155"/>
    </location>
    <ligand>
        <name>1-deoxy-D-xylulose 5-phosphate</name>
        <dbReference type="ChEBI" id="CHEBI:57792"/>
    </ligand>
</feature>
<feature type="binding site" evidence="1">
    <location>
        <position position="155"/>
    </location>
    <ligand>
        <name>Mn(2+)</name>
        <dbReference type="ChEBI" id="CHEBI:29035"/>
    </ligand>
</feature>
<feature type="binding site" evidence="1">
    <location>
        <position position="184"/>
    </location>
    <ligand>
        <name>1-deoxy-D-xylulose 5-phosphate</name>
        <dbReference type="ChEBI" id="CHEBI:57792"/>
    </ligand>
</feature>
<feature type="binding site" evidence="1">
    <location>
        <position position="207"/>
    </location>
    <ligand>
        <name>1-deoxy-D-xylulose 5-phosphate</name>
        <dbReference type="ChEBI" id="CHEBI:57792"/>
    </ligand>
</feature>
<feature type="binding site" evidence="1">
    <location>
        <position position="213"/>
    </location>
    <ligand>
        <name>NADPH</name>
        <dbReference type="ChEBI" id="CHEBI:57783"/>
    </ligand>
</feature>
<feature type="binding site" evidence="1">
    <location>
        <position position="220"/>
    </location>
    <ligand>
        <name>1-deoxy-D-xylulose 5-phosphate</name>
        <dbReference type="ChEBI" id="CHEBI:57792"/>
    </ligand>
</feature>
<feature type="binding site" evidence="1">
    <location>
        <position position="225"/>
    </location>
    <ligand>
        <name>1-deoxy-D-xylulose 5-phosphate</name>
        <dbReference type="ChEBI" id="CHEBI:57792"/>
    </ligand>
</feature>
<feature type="binding site" evidence="1">
    <location>
        <position position="226"/>
    </location>
    <ligand>
        <name>1-deoxy-D-xylulose 5-phosphate</name>
        <dbReference type="ChEBI" id="CHEBI:57792"/>
    </ligand>
</feature>
<feature type="binding site" evidence="1">
    <location>
        <position position="229"/>
    </location>
    <ligand>
        <name>1-deoxy-D-xylulose 5-phosphate</name>
        <dbReference type="ChEBI" id="CHEBI:57792"/>
    </ligand>
</feature>
<feature type="binding site" evidence="1">
    <location>
        <position position="229"/>
    </location>
    <ligand>
        <name>Mn(2+)</name>
        <dbReference type="ChEBI" id="CHEBI:29035"/>
    </ligand>
</feature>
<reference key="1">
    <citation type="journal article" date="2006" name="Genome Biol.">
        <title>Genomic analysis reveals that Pseudomonas aeruginosa virulence is combinatorial.</title>
        <authorList>
            <person name="Lee D.G."/>
            <person name="Urbach J.M."/>
            <person name="Wu G."/>
            <person name="Liberati N.T."/>
            <person name="Feinbaum R.L."/>
            <person name="Miyata S."/>
            <person name="Diggins L.T."/>
            <person name="He J."/>
            <person name="Saucier M."/>
            <person name="Deziel E."/>
            <person name="Friedman L."/>
            <person name="Li L."/>
            <person name="Grills G."/>
            <person name="Montgomery K."/>
            <person name="Kucherlapati R."/>
            <person name="Rahme L.G."/>
            <person name="Ausubel F.M."/>
        </authorList>
    </citation>
    <scope>NUCLEOTIDE SEQUENCE [LARGE SCALE GENOMIC DNA]</scope>
    <source>
        <strain>UCBPP-PA14</strain>
    </source>
</reference>
<protein>
    <recommendedName>
        <fullName evidence="1">1-deoxy-D-xylulose 5-phosphate reductoisomerase</fullName>
        <shortName evidence="1">DXP reductoisomerase</shortName>
        <ecNumber evidence="1">1.1.1.267</ecNumber>
    </recommendedName>
    <alternativeName>
        <fullName evidence="1">1-deoxyxylulose-5-phosphate reductoisomerase</fullName>
    </alternativeName>
    <alternativeName>
        <fullName evidence="1">2-C-methyl-D-erythritol 4-phosphate synthase</fullName>
    </alternativeName>
</protein>